<keyword id="KW-0472">Membrane</keyword>
<keyword id="KW-0496">Mitochondrion</keyword>
<keyword id="KW-0999">Mitochondrion inner membrane</keyword>
<keyword id="KW-1185">Reference proteome</keyword>
<keyword id="KW-0809">Transit peptide</keyword>
<keyword id="KW-0812">Transmembrane</keyword>
<keyword id="KW-1133">Transmembrane helix</keyword>
<comment type="function">
    <text evidence="1">Required for the assembly of the mitochondrial respiratory chain complex IV (CIV), also known as cytochrome c oxidase. May participate in merging the COX1 and COX2 assembly lines.</text>
</comment>
<comment type="subcellular location">
    <subcellularLocation>
        <location evidence="1">Mitochondrion inner membrane</location>
        <topology evidence="1">Single-pass membrane protein</topology>
    </subcellularLocation>
</comment>
<comment type="similarity">
    <text evidence="3">Belongs to the COX16 family.</text>
</comment>
<sequence length="114" mass="13350">MTFQSKKFPSTANTNTFAAKYRAMMKKHPFLLFGLPFMSVIVAGSFILTPAAAIRYEKYDRKVRQVSREEELGLGQRKRRVDIREEYYRLAAKDLDNWEQKRVERLKGESDGLL</sequence>
<accession>Q7SI11</accession>
<name>COX16_NEUCR</name>
<gene>
    <name type="primary">cox-9</name>
    <name type="synonym">cox16</name>
    <name type="ORF">NCU00641</name>
</gene>
<organism>
    <name type="scientific">Neurospora crassa (strain ATCC 24698 / 74-OR23-1A / CBS 708.71 / DSM 1257 / FGSC 987)</name>
    <dbReference type="NCBI Taxonomy" id="367110"/>
    <lineage>
        <taxon>Eukaryota</taxon>
        <taxon>Fungi</taxon>
        <taxon>Dikarya</taxon>
        <taxon>Ascomycota</taxon>
        <taxon>Pezizomycotina</taxon>
        <taxon>Sordariomycetes</taxon>
        <taxon>Sordariomycetidae</taxon>
        <taxon>Sordariales</taxon>
        <taxon>Sordariaceae</taxon>
        <taxon>Neurospora</taxon>
    </lineage>
</organism>
<proteinExistence type="inferred from homology"/>
<protein>
    <recommendedName>
        <fullName>Cytochrome c oxidase assembly protein cox16, mitochondrial</fullName>
    </recommendedName>
</protein>
<evidence type="ECO:0000250" key="1">
    <source>
        <dbReference type="UniProtKB" id="P47081"/>
    </source>
</evidence>
<evidence type="ECO:0000255" key="2"/>
<evidence type="ECO:0000305" key="3"/>
<reference key="1">
    <citation type="journal article" date="2003" name="Nature">
        <title>The genome sequence of the filamentous fungus Neurospora crassa.</title>
        <authorList>
            <person name="Galagan J.E."/>
            <person name="Calvo S.E."/>
            <person name="Borkovich K.A."/>
            <person name="Selker E.U."/>
            <person name="Read N.D."/>
            <person name="Jaffe D.B."/>
            <person name="FitzHugh W."/>
            <person name="Ma L.-J."/>
            <person name="Smirnov S."/>
            <person name="Purcell S."/>
            <person name="Rehman B."/>
            <person name="Elkins T."/>
            <person name="Engels R."/>
            <person name="Wang S."/>
            <person name="Nielsen C.B."/>
            <person name="Butler J."/>
            <person name="Endrizzi M."/>
            <person name="Qui D."/>
            <person name="Ianakiev P."/>
            <person name="Bell-Pedersen D."/>
            <person name="Nelson M.A."/>
            <person name="Werner-Washburne M."/>
            <person name="Selitrennikoff C.P."/>
            <person name="Kinsey J.A."/>
            <person name="Braun E.L."/>
            <person name="Zelter A."/>
            <person name="Schulte U."/>
            <person name="Kothe G.O."/>
            <person name="Jedd G."/>
            <person name="Mewes H.-W."/>
            <person name="Staben C."/>
            <person name="Marcotte E."/>
            <person name="Greenberg D."/>
            <person name="Roy A."/>
            <person name="Foley K."/>
            <person name="Naylor J."/>
            <person name="Stange-Thomann N."/>
            <person name="Barrett R."/>
            <person name="Gnerre S."/>
            <person name="Kamal M."/>
            <person name="Kamvysselis M."/>
            <person name="Mauceli E.W."/>
            <person name="Bielke C."/>
            <person name="Rudd S."/>
            <person name="Frishman D."/>
            <person name="Krystofova S."/>
            <person name="Rasmussen C."/>
            <person name="Metzenberg R.L."/>
            <person name="Perkins D.D."/>
            <person name="Kroken S."/>
            <person name="Cogoni C."/>
            <person name="Macino G."/>
            <person name="Catcheside D.E.A."/>
            <person name="Li W."/>
            <person name="Pratt R.J."/>
            <person name="Osmani S.A."/>
            <person name="DeSouza C.P.C."/>
            <person name="Glass N.L."/>
            <person name="Orbach M.J."/>
            <person name="Berglund J.A."/>
            <person name="Voelker R."/>
            <person name="Yarden O."/>
            <person name="Plamann M."/>
            <person name="Seiler S."/>
            <person name="Dunlap J.C."/>
            <person name="Radford A."/>
            <person name="Aramayo R."/>
            <person name="Natvig D.O."/>
            <person name="Alex L.A."/>
            <person name="Mannhaupt G."/>
            <person name="Ebbole D.J."/>
            <person name="Freitag M."/>
            <person name="Paulsen I."/>
            <person name="Sachs M.S."/>
            <person name="Lander E.S."/>
            <person name="Nusbaum C."/>
            <person name="Birren B.W."/>
        </authorList>
    </citation>
    <scope>NUCLEOTIDE SEQUENCE [LARGE SCALE GENOMIC DNA]</scope>
    <source>
        <strain>ATCC 24698 / 74-OR23-1A / CBS 708.71 / DSM 1257 / FGSC 987</strain>
    </source>
</reference>
<dbReference type="EMBL" id="CM002236">
    <property type="protein sequence ID" value="EAA36545.1"/>
    <property type="molecule type" value="Genomic_DNA"/>
</dbReference>
<dbReference type="RefSeq" id="XP_965781.1">
    <property type="nucleotide sequence ID" value="XM_960688.1"/>
</dbReference>
<dbReference type="SMR" id="Q7SI11"/>
<dbReference type="FunCoup" id="Q7SI11">
    <property type="interactions" value="133"/>
</dbReference>
<dbReference type="STRING" id="367110.Q7SI11"/>
<dbReference type="PaxDb" id="5141-EFNCRP00000000992"/>
<dbReference type="EnsemblFungi" id="EAA36545">
    <property type="protein sequence ID" value="EAA36545"/>
    <property type="gene ID" value="NCU00641"/>
</dbReference>
<dbReference type="GeneID" id="3881978"/>
<dbReference type="KEGG" id="ncr:NCU00641"/>
<dbReference type="VEuPathDB" id="FungiDB:NCU00641"/>
<dbReference type="HOGENOM" id="CLU_131611_2_0_1"/>
<dbReference type="InParanoid" id="Q7SI11"/>
<dbReference type="OrthoDB" id="5516033at2759"/>
<dbReference type="Proteomes" id="UP000001805">
    <property type="component" value="Chromosome 1, Linkage Group I"/>
</dbReference>
<dbReference type="GO" id="GO:0005743">
    <property type="term" value="C:mitochondrial inner membrane"/>
    <property type="evidence" value="ECO:0000318"/>
    <property type="project" value="GO_Central"/>
</dbReference>
<dbReference type="GO" id="GO:0033617">
    <property type="term" value="P:mitochondrial cytochrome c oxidase assembly"/>
    <property type="evidence" value="ECO:0000318"/>
    <property type="project" value="GO_Central"/>
</dbReference>
<dbReference type="InterPro" id="IPR020164">
    <property type="entry name" value="Cyt_c_Oxase_assmbl_COX16"/>
</dbReference>
<dbReference type="PANTHER" id="PTHR17130:SF14">
    <property type="entry name" value="CYTOCHROME C OXIDASE ASSEMBLY PROTEIN COX16 HOMOLOG, MITOCHONDRIAL"/>
    <property type="match status" value="1"/>
</dbReference>
<dbReference type="PANTHER" id="PTHR17130">
    <property type="entry name" value="MITOCHONDRIAL OUTER MEMBRANE PROTEIN 25"/>
    <property type="match status" value="1"/>
</dbReference>
<dbReference type="Pfam" id="PF14138">
    <property type="entry name" value="COX16"/>
    <property type="match status" value="1"/>
</dbReference>
<feature type="transit peptide" description="Mitochondrion" evidence="2">
    <location>
        <begin position="1"/>
        <end status="unknown"/>
    </location>
</feature>
<feature type="chain" id="PRO_0000280650" description="Cytochrome c oxidase assembly protein cox16, mitochondrial">
    <location>
        <begin status="unknown"/>
        <end position="114"/>
    </location>
</feature>
<feature type="transmembrane region" description="Helical" evidence="2">
    <location>
        <begin position="29"/>
        <end position="49"/>
    </location>
</feature>